<sequence length="327" mass="37317">MQNLENIVAEALQAVEKASDVASLEALRVEYFGKKGHFTLLMQGLRDVPADERPAVGAKINEAKQKAQDALNGKKEQLETEELNAKLASESIDVSLPGRKTELGGLHPVSITIERVVKFFSELGFSVEKGPEIETDYYNFDALNIPAHHPARADHDTFWFDAERLLRTQTSGVQIRTMEKMQPPIRIMAPGRVYRNDYDQTHTPMFHQIELLYVDKKANFTELKGLLHDFLRAFFEEDLQVRFRPSYFPFTEPSAEVDVMGKNGKWLEVLGCGMVHPNVLRNVGIDPDEYTGFAVGMGVERLTMLRYNVTDLRSFFENDLRFLKQFK</sequence>
<feature type="chain" id="PRO_1000199312" description="Phenylalanine--tRNA ligase alpha subunit">
    <location>
        <begin position="1"/>
        <end position="327"/>
    </location>
</feature>
<feature type="binding site" evidence="1">
    <location>
        <position position="252"/>
    </location>
    <ligand>
        <name>Mg(2+)</name>
        <dbReference type="ChEBI" id="CHEBI:18420"/>
        <note>shared with beta subunit</note>
    </ligand>
</feature>
<keyword id="KW-0030">Aminoacyl-tRNA synthetase</keyword>
<keyword id="KW-0067">ATP-binding</keyword>
<keyword id="KW-0963">Cytoplasm</keyword>
<keyword id="KW-0436">Ligase</keyword>
<keyword id="KW-0460">Magnesium</keyword>
<keyword id="KW-0479">Metal-binding</keyword>
<keyword id="KW-0547">Nucleotide-binding</keyword>
<keyword id="KW-0648">Protein biosynthesis</keyword>
<keyword id="KW-1185">Reference proteome</keyword>
<evidence type="ECO:0000255" key="1">
    <source>
        <dbReference type="HAMAP-Rule" id="MF_00281"/>
    </source>
</evidence>
<accession>B8F4T5</accession>
<organism>
    <name type="scientific">Glaesserella parasuis serovar 5 (strain SH0165)</name>
    <name type="common">Haemophilus parasuis</name>
    <dbReference type="NCBI Taxonomy" id="557723"/>
    <lineage>
        <taxon>Bacteria</taxon>
        <taxon>Pseudomonadati</taxon>
        <taxon>Pseudomonadota</taxon>
        <taxon>Gammaproteobacteria</taxon>
        <taxon>Pasteurellales</taxon>
        <taxon>Pasteurellaceae</taxon>
        <taxon>Glaesserella</taxon>
    </lineage>
</organism>
<name>SYFA_GLAP5</name>
<dbReference type="EC" id="6.1.1.20" evidence="1"/>
<dbReference type="EMBL" id="CP001321">
    <property type="protein sequence ID" value="ACL32337.1"/>
    <property type="molecule type" value="Genomic_DNA"/>
</dbReference>
<dbReference type="RefSeq" id="WP_012621869.1">
    <property type="nucleotide sequence ID" value="NC_011852.1"/>
</dbReference>
<dbReference type="SMR" id="B8F4T5"/>
<dbReference type="STRING" id="557723.HAPS_0691"/>
<dbReference type="KEGG" id="hap:HAPS_0691"/>
<dbReference type="HOGENOM" id="CLU_025086_0_1_6"/>
<dbReference type="Proteomes" id="UP000006743">
    <property type="component" value="Chromosome"/>
</dbReference>
<dbReference type="GO" id="GO:0005737">
    <property type="term" value="C:cytoplasm"/>
    <property type="evidence" value="ECO:0007669"/>
    <property type="project" value="UniProtKB-SubCell"/>
</dbReference>
<dbReference type="GO" id="GO:0005524">
    <property type="term" value="F:ATP binding"/>
    <property type="evidence" value="ECO:0007669"/>
    <property type="project" value="UniProtKB-UniRule"/>
</dbReference>
<dbReference type="GO" id="GO:0000287">
    <property type="term" value="F:magnesium ion binding"/>
    <property type="evidence" value="ECO:0007669"/>
    <property type="project" value="UniProtKB-UniRule"/>
</dbReference>
<dbReference type="GO" id="GO:0004826">
    <property type="term" value="F:phenylalanine-tRNA ligase activity"/>
    <property type="evidence" value="ECO:0007669"/>
    <property type="project" value="UniProtKB-UniRule"/>
</dbReference>
<dbReference type="GO" id="GO:0000049">
    <property type="term" value="F:tRNA binding"/>
    <property type="evidence" value="ECO:0007669"/>
    <property type="project" value="InterPro"/>
</dbReference>
<dbReference type="GO" id="GO:0006432">
    <property type="term" value="P:phenylalanyl-tRNA aminoacylation"/>
    <property type="evidence" value="ECO:0007669"/>
    <property type="project" value="UniProtKB-UniRule"/>
</dbReference>
<dbReference type="CDD" id="cd00496">
    <property type="entry name" value="PheRS_alpha_core"/>
    <property type="match status" value="1"/>
</dbReference>
<dbReference type="FunFam" id="3.30.930.10:FF:000003">
    <property type="entry name" value="Phenylalanine--tRNA ligase alpha subunit"/>
    <property type="match status" value="1"/>
</dbReference>
<dbReference type="Gene3D" id="3.30.930.10">
    <property type="entry name" value="Bira Bifunctional Protein, Domain 2"/>
    <property type="match status" value="1"/>
</dbReference>
<dbReference type="HAMAP" id="MF_00281">
    <property type="entry name" value="Phe_tRNA_synth_alpha1"/>
    <property type="match status" value="1"/>
</dbReference>
<dbReference type="InterPro" id="IPR006195">
    <property type="entry name" value="aa-tRNA-synth_II"/>
</dbReference>
<dbReference type="InterPro" id="IPR045864">
    <property type="entry name" value="aa-tRNA-synth_II/BPL/LPL"/>
</dbReference>
<dbReference type="InterPro" id="IPR004529">
    <property type="entry name" value="Phe-tRNA-synth_IIc_asu"/>
</dbReference>
<dbReference type="InterPro" id="IPR004188">
    <property type="entry name" value="Phe-tRNA_ligase_II_N"/>
</dbReference>
<dbReference type="InterPro" id="IPR022911">
    <property type="entry name" value="Phe_tRNA_ligase_alpha1_bac"/>
</dbReference>
<dbReference type="InterPro" id="IPR002319">
    <property type="entry name" value="Phenylalanyl-tRNA_Synthase"/>
</dbReference>
<dbReference type="InterPro" id="IPR010978">
    <property type="entry name" value="tRNA-bd_arm"/>
</dbReference>
<dbReference type="NCBIfam" id="TIGR00468">
    <property type="entry name" value="pheS"/>
    <property type="match status" value="1"/>
</dbReference>
<dbReference type="PANTHER" id="PTHR11538:SF41">
    <property type="entry name" value="PHENYLALANINE--TRNA LIGASE, MITOCHONDRIAL"/>
    <property type="match status" value="1"/>
</dbReference>
<dbReference type="PANTHER" id="PTHR11538">
    <property type="entry name" value="PHENYLALANYL-TRNA SYNTHETASE"/>
    <property type="match status" value="1"/>
</dbReference>
<dbReference type="Pfam" id="PF02912">
    <property type="entry name" value="Phe_tRNA-synt_N"/>
    <property type="match status" value="1"/>
</dbReference>
<dbReference type="Pfam" id="PF01409">
    <property type="entry name" value="tRNA-synt_2d"/>
    <property type="match status" value="1"/>
</dbReference>
<dbReference type="SUPFAM" id="SSF55681">
    <property type="entry name" value="Class II aaRS and biotin synthetases"/>
    <property type="match status" value="1"/>
</dbReference>
<dbReference type="SUPFAM" id="SSF46589">
    <property type="entry name" value="tRNA-binding arm"/>
    <property type="match status" value="1"/>
</dbReference>
<dbReference type="PROSITE" id="PS50862">
    <property type="entry name" value="AA_TRNA_LIGASE_II"/>
    <property type="match status" value="1"/>
</dbReference>
<protein>
    <recommendedName>
        <fullName evidence="1">Phenylalanine--tRNA ligase alpha subunit</fullName>
        <ecNumber evidence="1">6.1.1.20</ecNumber>
    </recommendedName>
    <alternativeName>
        <fullName evidence="1">Phenylalanyl-tRNA synthetase alpha subunit</fullName>
        <shortName evidence="1">PheRS</shortName>
    </alternativeName>
</protein>
<proteinExistence type="inferred from homology"/>
<gene>
    <name evidence="1" type="primary">pheS</name>
    <name type="ordered locus">HAPS_0691</name>
</gene>
<comment type="catalytic activity">
    <reaction evidence="1">
        <text>tRNA(Phe) + L-phenylalanine + ATP = L-phenylalanyl-tRNA(Phe) + AMP + diphosphate + H(+)</text>
        <dbReference type="Rhea" id="RHEA:19413"/>
        <dbReference type="Rhea" id="RHEA-COMP:9668"/>
        <dbReference type="Rhea" id="RHEA-COMP:9699"/>
        <dbReference type="ChEBI" id="CHEBI:15378"/>
        <dbReference type="ChEBI" id="CHEBI:30616"/>
        <dbReference type="ChEBI" id="CHEBI:33019"/>
        <dbReference type="ChEBI" id="CHEBI:58095"/>
        <dbReference type="ChEBI" id="CHEBI:78442"/>
        <dbReference type="ChEBI" id="CHEBI:78531"/>
        <dbReference type="ChEBI" id="CHEBI:456215"/>
        <dbReference type="EC" id="6.1.1.20"/>
    </reaction>
</comment>
<comment type="cofactor">
    <cofactor evidence="1">
        <name>Mg(2+)</name>
        <dbReference type="ChEBI" id="CHEBI:18420"/>
    </cofactor>
    <text evidence="1">Binds 2 magnesium ions per tetramer.</text>
</comment>
<comment type="subunit">
    <text evidence="1">Tetramer of two alpha and two beta subunits.</text>
</comment>
<comment type="subcellular location">
    <subcellularLocation>
        <location evidence="1">Cytoplasm</location>
    </subcellularLocation>
</comment>
<comment type="similarity">
    <text evidence="1">Belongs to the class-II aminoacyl-tRNA synthetase family. Phe-tRNA synthetase alpha subunit type 1 subfamily.</text>
</comment>
<reference key="1">
    <citation type="journal article" date="2009" name="J. Bacteriol.">
        <title>Complete genome sequence of Haemophilus parasuis SH0165.</title>
        <authorList>
            <person name="Yue M."/>
            <person name="Yang F."/>
            <person name="Yang J."/>
            <person name="Bei W."/>
            <person name="Cai X."/>
            <person name="Chen L."/>
            <person name="Dong J."/>
            <person name="Zhou R."/>
            <person name="Jin M."/>
            <person name="Jin Q."/>
            <person name="Chen H."/>
        </authorList>
    </citation>
    <scope>NUCLEOTIDE SEQUENCE [LARGE SCALE GENOMIC DNA]</scope>
    <source>
        <strain>SH0165</strain>
    </source>
</reference>